<sequence length="306" mass="35247">MKVNMEYTKEKKVGEGTYAVVYLGCQHSTGRKIAIKEIKTSEFKDGLDMSAIREVKYLQEMQHPNVIELIDIFMAYDNLNLVLEFLPTDLEVVIKDKSILFTPADIKAWMLMTLRGVYHCHRNFILHRDLKPNNLLFSPDGQIKVADFGLARAIPAPHEILTSNVVTRWYRAPELLFGAKHYTSAIDIWSVGVIFAELMLRIPYLPGQNDVDQMEVTFRALGTPTDRDWPEVSSFMTYNKLQIYPPPSRDELRKRFIAASEYALDFMCGMLTMNPQKRWTAVQCLESDYFKELPPPSDPSSIKIRN</sequence>
<dbReference type="EC" id="2.7.11.23"/>
<dbReference type="EMBL" id="X04423">
    <property type="protein sequence ID" value="CAA28019.1"/>
    <property type="molecule type" value="Genomic_DNA"/>
</dbReference>
<dbReference type="EMBL" id="X95644">
    <property type="protein sequence ID" value="CAA64904.1"/>
    <property type="molecule type" value="Genomic_DNA"/>
</dbReference>
<dbReference type="EMBL" id="Z74156">
    <property type="protein sequence ID" value="CAA98675.1"/>
    <property type="molecule type" value="Genomic_DNA"/>
</dbReference>
<dbReference type="EMBL" id="BK006938">
    <property type="protein sequence ID" value="DAA11752.1"/>
    <property type="molecule type" value="Genomic_DNA"/>
</dbReference>
<dbReference type="PIR" id="A25698">
    <property type="entry name" value="A25698"/>
</dbReference>
<dbReference type="RefSeq" id="NP_010175.1">
    <property type="nucleotide sequence ID" value="NM_001180167.1"/>
</dbReference>
<dbReference type="PDB" id="6XI8">
    <property type="method" value="EM"/>
    <property type="resolution" value="3.64 A"/>
    <property type="chains" value="A=3-303"/>
</dbReference>
<dbReference type="PDB" id="7KUE">
    <property type="method" value="EM"/>
    <property type="resolution" value="3.50 A"/>
    <property type="chains" value="A=1-306"/>
</dbReference>
<dbReference type="PDBsum" id="6XI8"/>
<dbReference type="PDBsum" id="7KUE"/>
<dbReference type="EMDB" id="EMD-22191"/>
<dbReference type="EMDB" id="EMD-23036"/>
<dbReference type="SMR" id="P06242"/>
<dbReference type="BioGRID" id="31954">
    <property type="interactions" value="559"/>
</dbReference>
<dbReference type="ComplexPortal" id="CPX-1659">
    <property type="entry name" value="General transcription factor TFIIH complex"/>
</dbReference>
<dbReference type="ComplexPortal" id="CPX-1660">
    <property type="entry name" value="General transcription factor complex TFIIK"/>
</dbReference>
<dbReference type="DIP" id="DIP-2259N"/>
<dbReference type="FunCoup" id="P06242">
    <property type="interactions" value="1312"/>
</dbReference>
<dbReference type="IntAct" id="P06242">
    <property type="interactions" value="17"/>
</dbReference>
<dbReference type="MINT" id="P06242"/>
<dbReference type="STRING" id="4932.YDL108W"/>
<dbReference type="BindingDB" id="P06242"/>
<dbReference type="ChEMBL" id="CHEMBL5370"/>
<dbReference type="iPTMnet" id="P06242"/>
<dbReference type="PaxDb" id="4932-YDL108W"/>
<dbReference type="PeptideAtlas" id="P06242"/>
<dbReference type="EnsemblFungi" id="YDL108W_mRNA">
    <property type="protein sequence ID" value="YDL108W"/>
    <property type="gene ID" value="YDL108W"/>
</dbReference>
<dbReference type="GeneID" id="851450"/>
<dbReference type="KEGG" id="sce:YDL108W"/>
<dbReference type="AGR" id="SGD:S000002266"/>
<dbReference type="SGD" id="S000002266">
    <property type="gene designation" value="KIN28"/>
</dbReference>
<dbReference type="VEuPathDB" id="FungiDB:YDL108W"/>
<dbReference type="eggNOG" id="KOG0659">
    <property type="taxonomic scope" value="Eukaryota"/>
</dbReference>
<dbReference type="GeneTree" id="ENSGT00940000155179"/>
<dbReference type="HOGENOM" id="CLU_000288_181_1_1"/>
<dbReference type="InParanoid" id="P06242"/>
<dbReference type="OMA" id="GIHHCHR"/>
<dbReference type="OrthoDB" id="1732493at2759"/>
<dbReference type="BioCyc" id="YEAST:G3O-29509-MONOMER"/>
<dbReference type="BRENDA" id="2.7.11.22">
    <property type="organism ID" value="984"/>
</dbReference>
<dbReference type="BRENDA" id="2.7.11.23">
    <property type="organism ID" value="984"/>
</dbReference>
<dbReference type="Reactome" id="R-SCE-113418">
    <property type="pathway name" value="Formation of the Early Elongation Complex"/>
</dbReference>
<dbReference type="Reactome" id="R-SCE-674695">
    <property type="pathway name" value="RNA Polymerase II Pre-transcription Events"/>
</dbReference>
<dbReference type="Reactome" id="R-SCE-6781823">
    <property type="pathway name" value="Formation of TC-NER Pre-Incision Complex"/>
</dbReference>
<dbReference type="Reactome" id="R-SCE-6782135">
    <property type="pathway name" value="Dual incision in TC-NER"/>
</dbReference>
<dbReference type="Reactome" id="R-SCE-6782210">
    <property type="pathway name" value="Gap-filling DNA repair synthesis and ligation in TC-NER"/>
</dbReference>
<dbReference type="Reactome" id="R-SCE-6796648">
    <property type="pathway name" value="TP53 Regulates Transcription of DNA Repair Genes"/>
</dbReference>
<dbReference type="Reactome" id="R-SCE-6807505">
    <property type="pathway name" value="RNA polymerase II transcribes snRNA genes"/>
</dbReference>
<dbReference type="Reactome" id="R-SCE-72086">
    <property type="pathway name" value="mRNA Capping"/>
</dbReference>
<dbReference type="Reactome" id="R-SCE-73772">
    <property type="pathway name" value="RNA Polymerase I Promoter Escape"/>
</dbReference>
<dbReference type="Reactome" id="R-SCE-73776">
    <property type="pathway name" value="RNA Polymerase II Promoter Escape"/>
</dbReference>
<dbReference type="Reactome" id="R-SCE-73779">
    <property type="pathway name" value="RNA Polymerase II Transcription Pre-Initiation And Promoter Opening"/>
</dbReference>
<dbReference type="Reactome" id="R-SCE-75953">
    <property type="pathway name" value="RNA Polymerase II Transcription Initiation"/>
</dbReference>
<dbReference type="Reactome" id="R-SCE-76042">
    <property type="pathway name" value="RNA Polymerase II Transcription Initiation And Promoter Clearance"/>
</dbReference>
<dbReference type="Reactome" id="R-SCE-77075">
    <property type="pathway name" value="RNA Pol II CTD phosphorylation and interaction with CE"/>
</dbReference>
<dbReference type="BioGRID-ORCS" id="851450">
    <property type="hits" value="1 hit in 13 CRISPR screens"/>
</dbReference>
<dbReference type="PRO" id="PR:P06242"/>
<dbReference type="Proteomes" id="UP000002311">
    <property type="component" value="Chromosome IV"/>
</dbReference>
<dbReference type="RNAct" id="P06242">
    <property type="molecule type" value="protein"/>
</dbReference>
<dbReference type="GO" id="GO:0005737">
    <property type="term" value="C:cytoplasm"/>
    <property type="evidence" value="ECO:0000318"/>
    <property type="project" value="GO_Central"/>
</dbReference>
<dbReference type="GO" id="GO:0005829">
    <property type="term" value="C:cytosol"/>
    <property type="evidence" value="ECO:0000314"/>
    <property type="project" value="SGD"/>
</dbReference>
<dbReference type="GO" id="GO:0005634">
    <property type="term" value="C:nucleus"/>
    <property type="evidence" value="ECO:0000314"/>
    <property type="project" value="SGD"/>
</dbReference>
<dbReference type="GO" id="GO:0005675">
    <property type="term" value="C:transcription factor TFIIH holo complex"/>
    <property type="evidence" value="ECO:0000314"/>
    <property type="project" value="SGD"/>
</dbReference>
<dbReference type="GO" id="GO:0070985">
    <property type="term" value="C:transcription factor TFIIK complex"/>
    <property type="evidence" value="ECO:0000314"/>
    <property type="project" value="ComplexPortal"/>
</dbReference>
<dbReference type="GO" id="GO:0005524">
    <property type="term" value="F:ATP binding"/>
    <property type="evidence" value="ECO:0007669"/>
    <property type="project" value="UniProtKB-KW"/>
</dbReference>
<dbReference type="GO" id="GO:0004693">
    <property type="term" value="F:cyclin-dependent protein serine/threonine kinase activity"/>
    <property type="evidence" value="ECO:0000318"/>
    <property type="project" value="GO_Central"/>
</dbReference>
<dbReference type="GO" id="GO:0004672">
    <property type="term" value="F:protein kinase activity"/>
    <property type="evidence" value="ECO:0007005"/>
    <property type="project" value="SGD"/>
</dbReference>
<dbReference type="GO" id="GO:0008353">
    <property type="term" value="F:RNA polymerase II CTD heptapeptide repeat kinase activity"/>
    <property type="evidence" value="ECO:0000314"/>
    <property type="project" value="SGD"/>
</dbReference>
<dbReference type="GO" id="GO:0006370">
    <property type="term" value="P:7-methylguanosine mRNA capping"/>
    <property type="evidence" value="ECO:0000315"/>
    <property type="project" value="SGD"/>
</dbReference>
<dbReference type="GO" id="GO:0051301">
    <property type="term" value="P:cell division"/>
    <property type="evidence" value="ECO:0007669"/>
    <property type="project" value="UniProtKB-KW"/>
</dbReference>
<dbReference type="GO" id="GO:0006995">
    <property type="term" value="P:cellular response to nitrogen starvation"/>
    <property type="evidence" value="ECO:0000315"/>
    <property type="project" value="GO_Central"/>
</dbReference>
<dbReference type="GO" id="GO:0006289">
    <property type="term" value="P:nucleotide-excision repair"/>
    <property type="evidence" value="ECO:0000314"/>
    <property type="project" value="ComplexPortal"/>
</dbReference>
<dbReference type="GO" id="GO:1905866">
    <property type="term" value="P:positive regulation of Atg1/ULK1 kinase complex assembly"/>
    <property type="evidence" value="ECO:0000315"/>
    <property type="project" value="GO_Central"/>
</dbReference>
<dbReference type="GO" id="GO:0010508">
    <property type="term" value="P:positive regulation of autophagy"/>
    <property type="evidence" value="ECO:0000315"/>
    <property type="project" value="SGD"/>
</dbReference>
<dbReference type="GO" id="GO:0045944">
    <property type="term" value="P:positive regulation of transcription by RNA polymerase II"/>
    <property type="evidence" value="ECO:0000314"/>
    <property type="project" value="SGD"/>
</dbReference>
<dbReference type="GO" id="GO:0032968">
    <property type="term" value="P:positive regulation of transcription elongation by RNA polymerase II"/>
    <property type="evidence" value="ECO:0000315"/>
    <property type="project" value="SGD"/>
</dbReference>
<dbReference type="GO" id="GO:0051726">
    <property type="term" value="P:regulation of cell cycle"/>
    <property type="evidence" value="ECO:0000318"/>
    <property type="project" value="GO_Central"/>
</dbReference>
<dbReference type="GO" id="GO:0006360">
    <property type="term" value="P:transcription by RNA polymerase I"/>
    <property type="evidence" value="ECO:0000315"/>
    <property type="project" value="SGD"/>
</dbReference>
<dbReference type="GO" id="GO:0006366">
    <property type="term" value="P:transcription by RNA polymerase II"/>
    <property type="evidence" value="ECO:0000314"/>
    <property type="project" value="SGD"/>
</dbReference>
<dbReference type="GO" id="GO:0006367">
    <property type="term" value="P:transcription initiation at RNA polymerase II promoter"/>
    <property type="evidence" value="ECO:0000314"/>
    <property type="project" value="ComplexPortal"/>
</dbReference>
<dbReference type="CDD" id="cd07841">
    <property type="entry name" value="STKc_CDK7"/>
    <property type="match status" value="1"/>
</dbReference>
<dbReference type="FunFam" id="1.10.510.10:FF:000097">
    <property type="entry name" value="Putative cyclin-dependent kinase 7"/>
    <property type="match status" value="1"/>
</dbReference>
<dbReference type="FunFam" id="3.30.200.20:FF:000498">
    <property type="entry name" value="Serine/threonine-protein kinase KIN28"/>
    <property type="match status" value="1"/>
</dbReference>
<dbReference type="Gene3D" id="3.30.200.20">
    <property type="entry name" value="Phosphorylase Kinase, domain 1"/>
    <property type="match status" value="1"/>
</dbReference>
<dbReference type="Gene3D" id="1.10.510.10">
    <property type="entry name" value="Transferase(Phosphotransferase) domain 1"/>
    <property type="match status" value="1"/>
</dbReference>
<dbReference type="InterPro" id="IPR050108">
    <property type="entry name" value="CDK"/>
</dbReference>
<dbReference type="InterPro" id="IPR037770">
    <property type="entry name" value="CDK7"/>
</dbReference>
<dbReference type="InterPro" id="IPR011009">
    <property type="entry name" value="Kinase-like_dom_sf"/>
</dbReference>
<dbReference type="InterPro" id="IPR000719">
    <property type="entry name" value="Prot_kinase_dom"/>
</dbReference>
<dbReference type="InterPro" id="IPR017441">
    <property type="entry name" value="Protein_kinase_ATP_BS"/>
</dbReference>
<dbReference type="InterPro" id="IPR008271">
    <property type="entry name" value="Ser/Thr_kinase_AS"/>
</dbReference>
<dbReference type="PANTHER" id="PTHR24056">
    <property type="entry name" value="CELL DIVISION PROTEIN KINASE"/>
    <property type="match status" value="1"/>
</dbReference>
<dbReference type="PANTHER" id="PTHR24056:SF0">
    <property type="entry name" value="CYCLIN-DEPENDENT KINASE 7"/>
    <property type="match status" value="1"/>
</dbReference>
<dbReference type="Pfam" id="PF00069">
    <property type="entry name" value="Pkinase"/>
    <property type="match status" value="1"/>
</dbReference>
<dbReference type="SMART" id="SM00220">
    <property type="entry name" value="S_TKc"/>
    <property type="match status" value="1"/>
</dbReference>
<dbReference type="SUPFAM" id="SSF56112">
    <property type="entry name" value="Protein kinase-like (PK-like)"/>
    <property type="match status" value="1"/>
</dbReference>
<dbReference type="PROSITE" id="PS00107">
    <property type="entry name" value="PROTEIN_KINASE_ATP"/>
    <property type="match status" value="1"/>
</dbReference>
<dbReference type="PROSITE" id="PS50011">
    <property type="entry name" value="PROTEIN_KINASE_DOM"/>
    <property type="match status" value="1"/>
</dbReference>
<dbReference type="PROSITE" id="PS00108">
    <property type="entry name" value="PROTEIN_KINASE_ST"/>
    <property type="match status" value="1"/>
</dbReference>
<name>KIN28_YEAST</name>
<organism>
    <name type="scientific">Saccharomyces cerevisiae (strain ATCC 204508 / S288c)</name>
    <name type="common">Baker's yeast</name>
    <dbReference type="NCBI Taxonomy" id="559292"/>
    <lineage>
        <taxon>Eukaryota</taxon>
        <taxon>Fungi</taxon>
        <taxon>Dikarya</taxon>
        <taxon>Ascomycota</taxon>
        <taxon>Saccharomycotina</taxon>
        <taxon>Saccharomycetes</taxon>
        <taxon>Saccharomycetales</taxon>
        <taxon>Saccharomycetaceae</taxon>
        <taxon>Saccharomyces</taxon>
    </lineage>
</organism>
<protein>
    <recommendedName>
        <fullName>Serine/threonine-protein kinase KIN28</fullName>
        <ecNumber>2.7.11.23</ecNumber>
    </recommendedName>
</protein>
<evidence type="ECO:0000255" key="1">
    <source>
        <dbReference type="PROSITE-ProRule" id="PRU00159"/>
    </source>
</evidence>
<evidence type="ECO:0000255" key="2">
    <source>
        <dbReference type="PROSITE-ProRule" id="PRU10027"/>
    </source>
</evidence>
<evidence type="ECO:0000269" key="3">
    <source>
    </source>
</evidence>
<evidence type="ECO:0000269" key="4">
    <source>
    </source>
</evidence>
<evidence type="ECO:0000269" key="5">
    <source>
    </source>
</evidence>
<evidence type="ECO:0000269" key="6">
    <source>
    </source>
</evidence>
<evidence type="ECO:0000269" key="7">
    <source>
    </source>
</evidence>
<evidence type="ECO:0000269" key="8">
    <source>
    </source>
</evidence>
<evidence type="ECO:0000269" key="9">
    <source>
    </source>
</evidence>
<evidence type="ECO:0000269" key="10">
    <source>
    </source>
</evidence>
<evidence type="ECO:0000269" key="11">
    <source>
    </source>
</evidence>
<evidence type="ECO:0000269" key="12">
    <source>
    </source>
</evidence>
<evidence type="ECO:0000305" key="13"/>
<evidence type="ECO:0007829" key="14">
    <source>
        <dbReference type="PDB" id="7KUE"/>
    </source>
</evidence>
<reference key="1">
    <citation type="journal article" date="1986" name="EMBO J.">
        <title>KIN28, a yeast split gene coding for a putative protein kinase homologous to CDC28.</title>
        <authorList>
            <person name="Simon M."/>
            <person name="Seraphin B."/>
            <person name="Faye G."/>
        </authorList>
    </citation>
    <scope>NUCLEOTIDE SEQUENCE [GENOMIC DNA]</scope>
</reference>
<reference key="2">
    <citation type="journal article" date="1996" name="Yeast">
        <title>The sequence of a 20.3 kb DNA fragment from the left arm of Saccharomyces cerevisiae chromosome IV contains the KIN28, MSS2, PHO2, POL3 and DUN1 genes, and six new open reading frames.</title>
        <authorList>
            <person name="Saiz J.E."/>
            <person name="Buitrago M.J."/>
            <person name="Garcia R."/>
            <person name="Revuelta J.L."/>
            <person name="del Rey F."/>
        </authorList>
    </citation>
    <scope>NUCLEOTIDE SEQUENCE [GENOMIC DNA]</scope>
    <source>
        <strain>ATCC 96604 / S288c / FY1679</strain>
    </source>
</reference>
<reference key="3">
    <citation type="journal article" date="1997" name="Nature">
        <title>The nucleotide sequence of Saccharomyces cerevisiae chromosome IV.</title>
        <authorList>
            <person name="Jacq C."/>
            <person name="Alt-Moerbe J."/>
            <person name="Andre B."/>
            <person name="Arnold W."/>
            <person name="Bahr A."/>
            <person name="Ballesta J.P.G."/>
            <person name="Bargues M."/>
            <person name="Baron L."/>
            <person name="Becker A."/>
            <person name="Biteau N."/>
            <person name="Bloecker H."/>
            <person name="Blugeon C."/>
            <person name="Boskovic J."/>
            <person name="Brandt P."/>
            <person name="Brueckner M."/>
            <person name="Buitrago M.J."/>
            <person name="Coster F."/>
            <person name="Delaveau T."/>
            <person name="del Rey F."/>
            <person name="Dujon B."/>
            <person name="Eide L.G."/>
            <person name="Garcia-Cantalejo J.M."/>
            <person name="Goffeau A."/>
            <person name="Gomez-Peris A."/>
            <person name="Granotier C."/>
            <person name="Hanemann V."/>
            <person name="Hankeln T."/>
            <person name="Hoheisel J.D."/>
            <person name="Jaeger W."/>
            <person name="Jimenez A."/>
            <person name="Jonniaux J.-L."/>
            <person name="Kraemer C."/>
            <person name="Kuester H."/>
            <person name="Laamanen P."/>
            <person name="Legros Y."/>
            <person name="Louis E.J."/>
            <person name="Moeller-Rieker S."/>
            <person name="Monnet A."/>
            <person name="Moro M."/>
            <person name="Mueller-Auer S."/>
            <person name="Nussbaumer B."/>
            <person name="Paricio N."/>
            <person name="Paulin L."/>
            <person name="Perea J."/>
            <person name="Perez-Alonso M."/>
            <person name="Perez-Ortin J.E."/>
            <person name="Pohl T.M."/>
            <person name="Prydz H."/>
            <person name="Purnelle B."/>
            <person name="Rasmussen S.W."/>
            <person name="Remacha M.A."/>
            <person name="Revuelta J.L."/>
            <person name="Rieger M."/>
            <person name="Salom D."/>
            <person name="Saluz H.P."/>
            <person name="Saiz J.E."/>
            <person name="Saren A.-M."/>
            <person name="Schaefer M."/>
            <person name="Scharfe M."/>
            <person name="Schmidt E.R."/>
            <person name="Schneider C."/>
            <person name="Scholler P."/>
            <person name="Schwarz S."/>
            <person name="Soler-Mira A."/>
            <person name="Urrestarazu L.A."/>
            <person name="Verhasselt P."/>
            <person name="Vissers S."/>
            <person name="Voet M."/>
            <person name="Volckaert G."/>
            <person name="Wagner G."/>
            <person name="Wambutt R."/>
            <person name="Wedler E."/>
            <person name="Wedler H."/>
            <person name="Woelfl S."/>
            <person name="Harris D.E."/>
            <person name="Bowman S."/>
            <person name="Brown D."/>
            <person name="Churcher C.M."/>
            <person name="Connor R."/>
            <person name="Dedman K."/>
            <person name="Gentles S."/>
            <person name="Hamlin N."/>
            <person name="Hunt S."/>
            <person name="Jones L."/>
            <person name="McDonald S."/>
            <person name="Murphy L.D."/>
            <person name="Niblett D."/>
            <person name="Odell C."/>
            <person name="Oliver K."/>
            <person name="Rajandream M.A."/>
            <person name="Richards C."/>
            <person name="Shore L."/>
            <person name="Walsh S.V."/>
            <person name="Barrell B.G."/>
            <person name="Dietrich F.S."/>
            <person name="Mulligan J.T."/>
            <person name="Allen E."/>
            <person name="Araujo R."/>
            <person name="Aviles E."/>
            <person name="Berno A."/>
            <person name="Carpenter J."/>
            <person name="Chen E."/>
            <person name="Cherry J.M."/>
            <person name="Chung E."/>
            <person name="Duncan M."/>
            <person name="Hunicke-Smith S."/>
            <person name="Hyman R.W."/>
            <person name="Komp C."/>
            <person name="Lashkari D."/>
            <person name="Lew H."/>
            <person name="Lin D."/>
            <person name="Mosedale D."/>
            <person name="Nakahara K."/>
            <person name="Namath A."/>
            <person name="Oefner P."/>
            <person name="Oh C."/>
            <person name="Petel F.X."/>
            <person name="Roberts D."/>
            <person name="Schramm S."/>
            <person name="Schroeder M."/>
            <person name="Shogren T."/>
            <person name="Shroff N."/>
            <person name="Winant A."/>
            <person name="Yelton M.A."/>
            <person name="Botstein D."/>
            <person name="Davis R.W."/>
            <person name="Johnston M."/>
            <person name="Andrews S."/>
            <person name="Brinkman R."/>
            <person name="Cooper J."/>
            <person name="Ding H."/>
            <person name="Du Z."/>
            <person name="Favello A."/>
            <person name="Fulton L."/>
            <person name="Gattung S."/>
            <person name="Greco T."/>
            <person name="Hallsworth K."/>
            <person name="Hawkins J."/>
            <person name="Hillier L.W."/>
            <person name="Jier M."/>
            <person name="Johnson D."/>
            <person name="Johnston L."/>
            <person name="Kirsten J."/>
            <person name="Kucaba T."/>
            <person name="Langston Y."/>
            <person name="Latreille P."/>
            <person name="Le T."/>
            <person name="Mardis E."/>
            <person name="Menezes S."/>
            <person name="Miller N."/>
            <person name="Nhan M."/>
            <person name="Pauley A."/>
            <person name="Peluso D."/>
            <person name="Rifkin L."/>
            <person name="Riles L."/>
            <person name="Taich A."/>
            <person name="Trevaskis E."/>
            <person name="Vignati D."/>
            <person name="Wilcox L."/>
            <person name="Wohldman P."/>
            <person name="Vaudin M."/>
            <person name="Wilson R."/>
            <person name="Waterston R."/>
            <person name="Albermann K."/>
            <person name="Hani J."/>
            <person name="Heumann K."/>
            <person name="Kleine K."/>
            <person name="Mewes H.-W."/>
            <person name="Zollner A."/>
            <person name="Zaccaria P."/>
        </authorList>
    </citation>
    <scope>NUCLEOTIDE SEQUENCE [LARGE SCALE GENOMIC DNA]</scope>
    <source>
        <strain>ATCC 204508 / S288c</strain>
    </source>
</reference>
<reference key="4">
    <citation type="journal article" date="2014" name="G3 (Bethesda)">
        <title>The reference genome sequence of Saccharomyces cerevisiae: Then and now.</title>
        <authorList>
            <person name="Engel S.R."/>
            <person name="Dietrich F.S."/>
            <person name="Fisk D.G."/>
            <person name="Binkley G."/>
            <person name="Balakrishnan R."/>
            <person name="Costanzo M.C."/>
            <person name="Dwight S.S."/>
            <person name="Hitz B.C."/>
            <person name="Karra K."/>
            <person name="Nash R.S."/>
            <person name="Weng S."/>
            <person name="Wong E.D."/>
            <person name="Lloyd P."/>
            <person name="Skrzypek M.S."/>
            <person name="Miyasato S.R."/>
            <person name="Simison M."/>
            <person name="Cherry J.M."/>
        </authorList>
    </citation>
    <scope>GENOME REANNOTATION</scope>
    <source>
        <strain>ATCC 204508 / S288c</strain>
    </source>
</reference>
<reference key="5">
    <citation type="journal article" date="1993" name="J. Mol. Biol.">
        <title>The kin28 protein kinase is associated with a cyclin in Saccharomyces cerevisiae.</title>
        <authorList>
            <person name="Valay J.G."/>
            <person name="Simon M."/>
            <person name="Faye G."/>
        </authorList>
    </citation>
    <scope>INTERACTION WITH CCL1</scope>
</reference>
<reference key="6">
    <citation type="journal article" date="1997" name="J. Biol. Chem.">
        <title>Genes for Tfb2, Tfb3, and Tfb4 subunits of yeast transcription/repair factor IIH. Homology to human cyclin-dependent kinase activating kinase and IIH subunits.</title>
        <authorList>
            <person name="Feaver W.J."/>
            <person name="Henry N.L."/>
            <person name="Wang Z."/>
            <person name="Wu X."/>
            <person name="Svejstrup J.Q."/>
            <person name="Bushnell D.A."/>
            <person name="Friedberg E.C."/>
            <person name="Kornberg R.D."/>
        </authorList>
    </citation>
    <scope>SUBUNIT</scope>
    <scope>INTERACTION WITH TFB3</scope>
    <source>
        <strain>DBY2019</strain>
    </source>
</reference>
<reference key="7">
    <citation type="journal article" date="1998" name="Mol. Cell. Biol.">
        <title>Cak1 is required for Kin28 phosphorylation and activation in vivo.</title>
        <authorList>
            <person name="Espinoza F.H."/>
            <person name="Farrell A."/>
            <person name="Nourse J.L."/>
            <person name="Chamberlin H.M."/>
            <person name="Gileadi O."/>
            <person name="Morgan D.O."/>
        </authorList>
    </citation>
    <scope>PHOSPHORYLATION AT THR-162</scope>
    <scope>MUTAGENESIS OF THR-162</scope>
</reference>
<reference key="8">
    <citation type="journal article" date="1999" name="Mol. Cell. Biol.">
        <title>Activating phosphorylation of the Kin28p subunit of yeast TFIIH by Cak1p.</title>
        <authorList>
            <person name="Kimmelman J."/>
            <person name="Kaldis P."/>
            <person name="Hengartner C.J."/>
            <person name="Laff G.M."/>
            <person name="Koh S.S."/>
            <person name="Young R.A."/>
            <person name="Solomon M.J."/>
        </authorList>
    </citation>
    <scope>PHOSPHORYLATION AT THR-162</scope>
    <scope>MUTAGENESIS OF ASP-147; 17-THR-TYR-18 AND THR-162</scope>
</reference>
<reference key="9">
    <citation type="journal article" date="2000" name="J. Biol. Chem.">
        <title>Interactions of Cdk7 and Kin28 with Hint/PKCI-1 and Hnt1 histidine triad proteins.</title>
        <authorList>
            <person name="Korsisaari N."/>
            <person name="Makela T.P."/>
        </authorList>
    </citation>
    <scope>INTERACTION WITH HNT1</scope>
</reference>
<reference key="10">
    <citation type="journal article" date="2000" name="Mol. Cell. Biol.">
        <title>Kin28, the TFIIH-associated carboxy-terminal domain kinase, facilitates the recruitment of mRNA processing machinery to RNA polymerase II.</title>
        <authorList>
            <person name="Rodriguez C.R."/>
            <person name="Cho E.-J."/>
            <person name="Keogh M.-C."/>
            <person name="Moore C.L."/>
            <person name="Greenleaf A.L."/>
            <person name="Buratowski S."/>
        </authorList>
    </citation>
    <scope>FUNCTION</scope>
</reference>
<reference key="11">
    <citation type="journal article" date="2002" name="Mol. Cell. Biol.">
        <title>Kin28 is found within TFIIH and a Kin28-Ccl1-Tfb3 trimer complex with differential sensitivities to T-loop phosphorylation.</title>
        <authorList>
            <person name="Keogh M.-C."/>
            <person name="Cho E.-J."/>
            <person name="Podolny V."/>
            <person name="Buratowski S."/>
        </authorList>
    </citation>
    <scope>IDENTIFICATION IN A COMPLEX WITH CCL1 AND TFB3</scope>
    <scope>PHOSPHORYLATION AT THR-162</scope>
    <scope>MUTAGENESIS OF THR-17; LYS-36; GLU-54; ASP-147; THR-162 AND SER-163</scope>
</reference>
<reference key="12">
    <citation type="journal article" date="2003" name="EMBO J.">
        <title>Osmostress-induced transcription by Hot1 depends on a Hog1-mediated recruitment of the RNA Pol II.</title>
        <authorList>
            <person name="Alepuz P.M."/>
            <person name="de Nadal E."/>
            <person name="Zapater M."/>
            <person name="Ammerer G."/>
            <person name="Posas F."/>
        </authorList>
    </citation>
    <scope>INTERACTION WITH HOG1</scope>
</reference>
<reference key="13">
    <citation type="journal article" date="2003" name="Nature">
        <title>Global analysis of protein localization in budding yeast.</title>
        <authorList>
            <person name="Huh W.-K."/>
            <person name="Falvo J.V."/>
            <person name="Gerke L.C."/>
            <person name="Carroll A.S."/>
            <person name="Howson R.W."/>
            <person name="Weissman J.S."/>
            <person name="O'Shea E.K."/>
        </authorList>
    </citation>
    <scope>SUBCELLULAR LOCATION [LARGE SCALE ANALYSIS]</scope>
</reference>
<reference key="14">
    <citation type="journal article" date="2003" name="Nature">
        <title>Global analysis of protein expression in yeast.</title>
        <authorList>
            <person name="Ghaemmaghami S."/>
            <person name="Huh W.-K."/>
            <person name="Bower K."/>
            <person name="Howson R.W."/>
            <person name="Belle A."/>
            <person name="Dephoure N."/>
            <person name="O'Shea E.K."/>
            <person name="Weissman J.S."/>
        </authorList>
    </citation>
    <scope>LEVEL OF PROTEIN EXPRESSION [LARGE SCALE ANALYSIS]</scope>
</reference>
<reference key="15">
    <citation type="journal article" date="2005" name="Mol. Cell. Proteomics">
        <title>Quantitative phosphoproteomics applied to the yeast pheromone signaling pathway.</title>
        <authorList>
            <person name="Gruhler A."/>
            <person name="Olsen J.V."/>
            <person name="Mohammed S."/>
            <person name="Mortensen P."/>
            <person name="Faergeman N.J."/>
            <person name="Mann M."/>
            <person name="Jensen O.N."/>
        </authorList>
    </citation>
    <scope>IDENTIFICATION BY MASS SPECTROMETRY [LARGE SCALE ANALYSIS]</scope>
    <source>
        <strain>YAL6B</strain>
    </source>
</reference>
<reference key="16">
    <citation type="journal article" date="2007" name="J. Proteome Res.">
        <title>Large-scale phosphorylation analysis of alpha-factor-arrested Saccharomyces cerevisiae.</title>
        <authorList>
            <person name="Li X."/>
            <person name="Gerber S.A."/>
            <person name="Rudner A.D."/>
            <person name="Beausoleil S.A."/>
            <person name="Haas W."/>
            <person name="Villen J."/>
            <person name="Elias J.E."/>
            <person name="Gygi S.P."/>
        </authorList>
    </citation>
    <scope>IDENTIFICATION BY MASS SPECTROMETRY [LARGE SCALE ANALYSIS]</scope>
    <source>
        <strain>ADR376</strain>
    </source>
</reference>
<reference key="17">
    <citation type="journal article" date="2008" name="Mol. Cell. Proteomics">
        <title>A multidimensional chromatography technology for in-depth phosphoproteome analysis.</title>
        <authorList>
            <person name="Albuquerque C.P."/>
            <person name="Smolka M.B."/>
            <person name="Payne S.H."/>
            <person name="Bafna V."/>
            <person name="Eng J."/>
            <person name="Zhou H."/>
        </authorList>
    </citation>
    <scope>IDENTIFICATION BY MASS SPECTROMETRY [LARGE SCALE ANALYSIS]</scope>
</reference>
<keyword id="KW-0002">3D-structure</keyword>
<keyword id="KW-0067">ATP-binding</keyword>
<keyword id="KW-0131">Cell cycle</keyword>
<keyword id="KW-0132">Cell division</keyword>
<keyword id="KW-0418">Kinase</keyword>
<keyword id="KW-0547">Nucleotide-binding</keyword>
<keyword id="KW-0539">Nucleus</keyword>
<keyword id="KW-0597">Phosphoprotein</keyword>
<keyword id="KW-1185">Reference proteome</keyword>
<keyword id="KW-0723">Serine/threonine-protein kinase</keyword>
<keyword id="KW-0804">Transcription</keyword>
<keyword id="KW-0805">Transcription regulation</keyword>
<keyword id="KW-0808">Transferase</keyword>
<gene>
    <name type="primary">KIN28</name>
    <name type="ordered locus">YDL108W</name>
    <name type="ORF">D2330</name>
</gene>
<feature type="chain" id="PRO_0000086132" description="Serine/threonine-protein kinase KIN28">
    <location>
        <begin position="1"/>
        <end position="306"/>
    </location>
</feature>
<feature type="domain" description="Protein kinase" evidence="1">
    <location>
        <begin position="7"/>
        <end position="290"/>
    </location>
</feature>
<feature type="active site" description="Proton acceptor" evidence="1 2">
    <location>
        <position position="129"/>
    </location>
</feature>
<feature type="binding site" evidence="1">
    <location>
        <begin position="13"/>
        <end position="21"/>
    </location>
    <ligand>
        <name>ATP</name>
        <dbReference type="ChEBI" id="CHEBI:30616"/>
    </ligand>
</feature>
<feature type="binding site" evidence="1">
    <location>
        <position position="36"/>
    </location>
    <ligand>
        <name>ATP</name>
        <dbReference type="ChEBI" id="CHEBI:30616"/>
    </ligand>
</feature>
<feature type="modified residue" description="Phosphothreonine; by CAK" evidence="3 6 12">
    <location>
        <position position="162"/>
    </location>
</feature>
<feature type="mutagenesis site" description="No effect on phosphorylation; no effect on kinase activity." evidence="3">
    <original>TY</original>
    <variation>AF</variation>
    <location>
        <begin position="17"/>
        <end position="18"/>
    </location>
</feature>
<feature type="mutagenesis site" description="Slow growth." evidence="6">
    <original>T</original>
    <variation>D</variation>
    <location>
        <position position="17"/>
    </location>
</feature>
<feature type="mutagenesis site" description="Normal growth." evidence="6">
    <original>T</original>
    <variation>E</variation>
    <variation>Q</variation>
    <variation>V</variation>
    <location>
        <position position="17"/>
    </location>
</feature>
<feature type="mutagenesis site" description="Slow growth." evidence="6">
    <original>K</original>
    <variation>A</variation>
    <location>
        <position position="36"/>
    </location>
</feature>
<feature type="mutagenesis site" description="Non-viable." evidence="6">
    <original>E</original>
    <variation>Q</variation>
    <location>
        <position position="54"/>
    </location>
</feature>
<feature type="mutagenesis site" description="Abolishes kinase activity." evidence="3 6">
    <original>D</original>
    <variation>N</variation>
    <location>
        <position position="147"/>
    </location>
</feature>
<feature type="mutagenesis site" description="Diminishes phosphorylation; 75-80% loss in kinase activity; no effect on survival." evidence="3 6 12">
    <original>T</original>
    <variation>A</variation>
    <location>
        <position position="162"/>
    </location>
</feature>
<feature type="mutagenesis site" description="No effect on kinase activity." evidence="3 6 12">
    <original>T</original>
    <variation>S</variation>
    <variation>D</variation>
    <variation>E</variation>
    <location>
        <position position="162"/>
    </location>
</feature>
<feature type="mutagenesis site" description="Normal growth." evidence="6">
    <original>S</original>
    <variation>A</variation>
    <location>
        <position position="163"/>
    </location>
</feature>
<feature type="strand" evidence="14">
    <location>
        <begin position="17"/>
        <end position="21"/>
    </location>
</feature>
<feature type="strand" evidence="14">
    <location>
        <begin position="36"/>
        <end position="38"/>
    </location>
</feature>
<feature type="helix" evidence="14">
    <location>
        <begin position="49"/>
        <end position="55"/>
    </location>
</feature>
<feature type="turn" evidence="14">
    <location>
        <begin position="56"/>
        <end position="58"/>
    </location>
</feature>
<feature type="strand" evidence="14">
    <location>
        <begin position="64"/>
        <end position="66"/>
    </location>
</feature>
<feature type="strand" evidence="14">
    <location>
        <begin position="76"/>
        <end position="80"/>
    </location>
</feature>
<feature type="helix" evidence="14">
    <location>
        <begin position="89"/>
        <end position="94"/>
    </location>
</feature>
<feature type="turn" evidence="14">
    <location>
        <begin position="102"/>
        <end position="104"/>
    </location>
</feature>
<feature type="helix" evidence="14">
    <location>
        <begin position="105"/>
        <end position="122"/>
    </location>
</feature>
<feature type="turn" evidence="14">
    <location>
        <begin position="132"/>
        <end position="134"/>
    </location>
</feature>
<feature type="helix" evidence="14">
    <location>
        <begin position="168"/>
        <end position="170"/>
    </location>
</feature>
<feature type="helix" evidence="14">
    <location>
        <begin position="173"/>
        <end position="177"/>
    </location>
</feature>
<feature type="helix" evidence="14">
    <location>
        <begin position="186"/>
        <end position="200"/>
    </location>
</feature>
<feature type="strand" evidence="14">
    <location>
        <begin position="209"/>
        <end position="211"/>
    </location>
</feature>
<feature type="helix" evidence="14">
    <location>
        <begin position="212"/>
        <end position="220"/>
    </location>
</feature>
<feature type="turn" evidence="14">
    <location>
        <begin position="226"/>
        <end position="228"/>
    </location>
</feature>
<feature type="turn" evidence="14">
    <location>
        <begin position="230"/>
        <end position="233"/>
    </location>
</feature>
<feature type="strand" evidence="14">
    <location>
        <begin position="234"/>
        <end position="236"/>
    </location>
</feature>
<feature type="helix" evidence="14">
    <location>
        <begin position="249"/>
        <end position="251"/>
    </location>
</feature>
<feature type="turn" evidence="14">
    <location>
        <begin position="252"/>
        <end position="255"/>
    </location>
</feature>
<feature type="helix" evidence="14">
    <location>
        <begin position="263"/>
        <end position="270"/>
    </location>
</feature>
<feature type="strand" evidence="14">
    <location>
        <begin position="275"/>
        <end position="278"/>
    </location>
</feature>
<feature type="helix" evidence="14">
    <location>
        <begin position="281"/>
        <end position="283"/>
    </location>
</feature>
<feature type="turn" evidence="14">
    <location>
        <begin position="284"/>
        <end position="286"/>
    </location>
</feature>
<feature type="strand" evidence="14">
    <location>
        <begin position="287"/>
        <end position="294"/>
    </location>
</feature>
<comment type="function">
    <text evidence="4">Catalytic component of the TFIIK complex (KIN28-CCL1 dimer) which is the protein kinase component of transcription factor IIH (TFIIH) and phosphorylates the C-terminal domain of RNA polymerase II during transition from transcription to elongation after preinitiation complex (PIC) formation, thereby positively regulating transcription. TFIIH (or factor B) is essential for both basal and activated transcription, and is involved in nucleotide excision repair (NER) of damaged DNA. TFIIH has DNA-dependent ATPase activity and is essential for polymerase II transcription in vitro. Essential for cell proliferation.</text>
</comment>
<comment type="catalytic activity">
    <reaction>
        <text>[DNA-directed RNA polymerase] + ATP = phospho-[DNA-directed RNA polymerase] + ADP + H(+)</text>
        <dbReference type="Rhea" id="RHEA:10216"/>
        <dbReference type="Rhea" id="RHEA-COMP:11321"/>
        <dbReference type="Rhea" id="RHEA-COMP:11322"/>
        <dbReference type="ChEBI" id="CHEBI:15378"/>
        <dbReference type="ChEBI" id="CHEBI:30616"/>
        <dbReference type="ChEBI" id="CHEBI:43176"/>
        <dbReference type="ChEBI" id="CHEBI:68546"/>
        <dbReference type="ChEBI" id="CHEBI:456216"/>
        <dbReference type="EC" id="2.7.11.23"/>
    </reaction>
</comment>
<comment type="subunit">
    <text evidence="5 6 7 10 11">CCL1 and KIN28 form the TFIIK complex, a component of the TFIIH holo complex. Component of a complex consisting of KIN28, CCL1 and TFB3. Interacts with TFB3. Also interacts with HNT1 and HOG1.</text>
</comment>
<comment type="interaction">
    <interactant intactId="EBI-9691">
        <id>P06242</id>
    </interactant>
    <interactant intactId="EBI-4385">
        <id>P37366</id>
        <label>CCL1</label>
    </interactant>
    <organismsDiffer>false</organismsDiffer>
    <experiments>8</experiments>
</comment>
<comment type="subcellular location">
    <subcellularLocation>
        <location evidence="8">Nucleus</location>
    </subcellularLocation>
</comment>
<comment type="PTM">
    <text evidence="3 6 12">Phosphorylation of Thr-162 regulates the affinity of interaction between CCL1, KIN28 and TFB3. Thr-162 phosphorylation does not vary through the cell cycle and is necessary for full kinase activity.</text>
</comment>
<comment type="miscellaneous">
    <text evidence="9">Present with 4400 molecules/cell in log phase SD medium.</text>
</comment>
<comment type="similarity">
    <text evidence="13">Belongs to the protein kinase superfamily. CMGC Ser/Thr protein kinase family. CDC2/CDKX subfamily.</text>
</comment>
<accession>P06242</accession>
<accession>D6VRP2</accession>
<proteinExistence type="evidence at protein level"/>